<proteinExistence type="inferred from homology"/>
<organism>
    <name type="scientific">Bacillus mycoides (strain KBAB4)</name>
    <name type="common">Bacillus weihenstephanensis</name>
    <dbReference type="NCBI Taxonomy" id="315730"/>
    <lineage>
        <taxon>Bacteria</taxon>
        <taxon>Bacillati</taxon>
        <taxon>Bacillota</taxon>
        <taxon>Bacilli</taxon>
        <taxon>Bacillales</taxon>
        <taxon>Bacillaceae</taxon>
        <taxon>Bacillus</taxon>
        <taxon>Bacillus cereus group</taxon>
    </lineage>
</organism>
<feature type="chain" id="PRO_1000091691" description="Elongation factor G">
    <location>
        <begin position="1"/>
        <end position="692"/>
    </location>
</feature>
<feature type="domain" description="tr-type G">
    <location>
        <begin position="8"/>
        <end position="282"/>
    </location>
</feature>
<feature type="binding site" evidence="1">
    <location>
        <begin position="17"/>
        <end position="24"/>
    </location>
    <ligand>
        <name>GTP</name>
        <dbReference type="ChEBI" id="CHEBI:37565"/>
    </ligand>
</feature>
<feature type="binding site" evidence="1">
    <location>
        <begin position="81"/>
        <end position="85"/>
    </location>
    <ligand>
        <name>GTP</name>
        <dbReference type="ChEBI" id="CHEBI:37565"/>
    </ligand>
</feature>
<feature type="binding site" evidence="1">
    <location>
        <begin position="135"/>
        <end position="138"/>
    </location>
    <ligand>
        <name>GTP</name>
        <dbReference type="ChEBI" id="CHEBI:37565"/>
    </ligand>
</feature>
<dbReference type="EMBL" id="CP000903">
    <property type="protein sequence ID" value="ABY41371.1"/>
    <property type="molecule type" value="Genomic_DNA"/>
</dbReference>
<dbReference type="RefSeq" id="WP_002139943.1">
    <property type="nucleotide sequence ID" value="NC_010184.1"/>
</dbReference>
<dbReference type="SMR" id="A9VP74"/>
<dbReference type="KEGG" id="bwe:BcerKBAB4_0102"/>
<dbReference type="eggNOG" id="COG0480">
    <property type="taxonomic scope" value="Bacteria"/>
</dbReference>
<dbReference type="HOGENOM" id="CLU_002794_4_1_9"/>
<dbReference type="Proteomes" id="UP000002154">
    <property type="component" value="Chromosome"/>
</dbReference>
<dbReference type="GO" id="GO:0005737">
    <property type="term" value="C:cytoplasm"/>
    <property type="evidence" value="ECO:0007669"/>
    <property type="project" value="UniProtKB-SubCell"/>
</dbReference>
<dbReference type="GO" id="GO:0005525">
    <property type="term" value="F:GTP binding"/>
    <property type="evidence" value="ECO:0007669"/>
    <property type="project" value="UniProtKB-UniRule"/>
</dbReference>
<dbReference type="GO" id="GO:0003924">
    <property type="term" value="F:GTPase activity"/>
    <property type="evidence" value="ECO:0007669"/>
    <property type="project" value="InterPro"/>
</dbReference>
<dbReference type="GO" id="GO:0003746">
    <property type="term" value="F:translation elongation factor activity"/>
    <property type="evidence" value="ECO:0007669"/>
    <property type="project" value="UniProtKB-UniRule"/>
</dbReference>
<dbReference type="GO" id="GO:0032790">
    <property type="term" value="P:ribosome disassembly"/>
    <property type="evidence" value="ECO:0007669"/>
    <property type="project" value="TreeGrafter"/>
</dbReference>
<dbReference type="CDD" id="cd01886">
    <property type="entry name" value="EF-G"/>
    <property type="match status" value="1"/>
</dbReference>
<dbReference type="CDD" id="cd16262">
    <property type="entry name" value="EFG_III"/>
    <property type="match status" value="1"/>
</dbReference>
<dbReference type="CDD" id="cd01434">
    <property type="entry name" value="EFG_mtEFG1_IV"/>
    <property type="match status" value="1"/>
</dbReference>
<dbReference type="CDD" id="cd03713">
    <property type="entry name" value="EFG_mtEFG_C"/>
    <property type="match status" value="1"/>
</dbReference>
<dbReference type="CDD" id="cd04088">
    <property type="entry name" value="EFG_mtEFG_II"/>
    <property type="match status" value="1"/>
</dbReference>
<dbReference type="FunFam" id="2.40.30.10:FF:000006">
    <property type="entry name" value="Elongation factor G"/>
    <property type="match status" value="1"/>
</dbReference>
<dbReference type="FunFam" id="3.30.230.10:FF:000003">
    <property type="entry name" value="Elongation factor G"/>
    <property type="match status" value="1"/>
</dbReference>
<dbReference type="FunFam" id="3.30.70.240:FF:000001">
    <property type="entry name" value="Elongation factor G"/>
    <property type="match status" value="1"/>
</dbReference>
<dbReference type="FunFam" id="3.30.70.870:FF:000001">
    <property type="entry name" value="Elongation factor G"/>
    <property type="match status" value="1"/>
</dbReference>
<dbReference type="FunFam" id="3.40.50.300:FF:000029">
    <property type="entry name" value="Elongation factor G"/>
    <property type="match status" value="1"/>
</dbReference>
<dbReference type="Gene3D" id="3.30.230.10">
    <property type="match status" value="1"/>
</dbReference>
<dbReference type="Gene3D" id="3.30.70.240">
    <property type="match status" value="1"/>
</dbReference>
<dbReference type="Gene3D" id="3.30.70.870">
    <property type="entry name" value="Elongation Factor G (Translational Gtpase), domain 3"/>
    <property type="match status" value="1"/>
</dbReference>
<dbReference type="Gene3D" id="3.40.50.300">
    <property type="entry name" value="P-loop containing nucleotide triphosphate hydrolases"/>
    <property type="match status" value="1"/>
</dbReference>
<dbReference type="Gene3D" id="2.40.30.10">
    <property type="entry name" value="Translation factors"/>
    <property type="match status" value="1"/>
</dbReference>
<dbReference type="HAMAP" id="MF_00054_B">
    <property type="entry name" value="EF_G_EF_2_B"/>
    <property type="match status" value="1"/>
</dbReference>
<dbReference type="InterPro" id="IPR041095">
    <property type="entry name" value="EFG_II"/>
</dbReference>
<dbReference type="InterPro" id="IPR009022">
    <property type="entry name" value="EFG_III"/>
</dbReference>
<dbReference type="InterPro" id="IPR035647">
    <property type="entry name" value="EFG_III/V"/>
</dbReference>
<dbReference type="InterPro" id="IPR047872">
    <property type="entry name" value="EFG_IV"/>
</dbReference>
<dbReference type="InterPro" id="IPR035649">
    <property type="entry name" value="EFG_V"/>
</dbReference>
<dbReference type="InterPro" id="IPR000640">
    <property type="entry name" value="EFG_V-like"/>
</dbReference>
<dbReference type="InterPro" id="IPR004161">
    <property type="entry name" value="EFTu-like_2"/>
</dbReference>
<dbReference type="InterPro" id="IPR031157">
    <property type="entry name" value="G_TR_CS"/>
</dbReference>
<dbReference type="InterPro" id="IPR027417">
    <property type="entry name" value="P-loop_NTPase"/>
</dbReference>
<dbReference type="InterPro" id="IPR020568">
    <property type="entry name" value="Ribosomal_Su5_D2-typ_SF"/>
</dbReference>
<dbReference type="InterPro" id="IPR014721">
    <property type="entry name" value="Ribsml_uS5_D2-typ_fold_subgr"/>
</dbReference>
<dbReference type="InterPro" id="IPR005225">
    <property type="entry name" value="Small_GTP-bd"/>
</dbReference>
<dbReference type="InterPro" id="IPR000795">
    <property type="entry name" value="T_Tr_GTP-bd_dom"/>
</dbReference>
<dbReference type="InterPro" id="IPR009000">
    <property type="entry name" value="Transl_B-barrel_sf"/>
</dbReference>
<dbReference type="InterPro" id="IPR004540">
    <property type="entry name" value="Transl_elong_EFG/EF2"/>
</dbReference>
<dbReference type="InterPro" id="IPR005517">
    <property type="entry name" value="Transl_elong_EFG/EF2_IV"/>
</dbReference>
<dbReference type="NCBIfam" id="TIGR00484">
    <property type="entry name" value="EF-G"/>
    <property type="match status" value="1"/>
</dbReference>
<dbReference type="NCBIfam" id="NF009379">
    <property type="entry name" value="PRK12740.1-3"/>
    <property type="match status" value="1"/>
</dbReference>
<dbReference type="NCBIfam" id="NF009381">
    <property type="entry name" value="PRK12740.1-5"/>
    <property type="match status" value="1"/>
</dbReference>
<dbReference type="NCBIfam" id="NF009891">
    <property type="entry name" value="PRK13351.1-1"/>
    <property type="match status" value="1"/>
</dbReference>
<dbReference type="NCBIfam" id="TIGR00231">
    <property type="entry name" value="small_GTP"/>
    <property type="match status" value="1"/>
</dbReference>
<dbReference type="PANTHER" id="PTHR43261:SF1">
    <property type="entry name" value="RIBOSOME-RELEASING FACTOR 2, MITOCHONDRIAL"/>
    <property type="match status" value="1"/>
</dbReference>
<dbReference type="PANTHER" id="PTHR43261">
    <property type="entry name" value="TRANSLATION ELONGATION FACTOR G-RELATED"/>
    <property type="match status" value="1"/>
</dbReference>
<dbReference type="Pfam" id="PF00679">
    <property type="entry name" value="EFG_C"/>
    <property type="match status" value="1"/>
</dbReference>
<dbReference type="Pfam" id="PF14492">
    <property type="entry name" value="EFG_III"/>
    <property type="match status" value="1"/>
</dbReference>
<dbReference type="Pfam" id="PF03764">
    <property type="entry name" value="EFG_IV"/>
    <property type="match status" value="1"/>
</dbReference>
<dbReference type="Pfam" id="PF00009">
    <property type="entry name" value="GTP_EFTU"/>
    <property type="match status" value="1"/>
</dbReference>
<dbReference type="Pfam" id="PF03144">
    <property type="entry name" value="GTP_EFTU_D2"/>
    <property type="match status" value="1"/>
</dbReference>
<dbReference type="PRINTS" id="PR00315">
    <property type="entry name" value="ELONGATNFCT"/>
</dbReference>
<dbReference type="SMART" id="SM00838">
    <property type="entry name" value="EFG_C"/>
    <property type="match status" value="1"/>
</dbReference>
<dbReference type="SMART" id="SM00889">
    <property type="entry name" value="EFG_IV"/>
    <property type="match status" value="1"/>
</dbReference>
<dbReference type="SUPFAM" id="SSF54980">
    <property type="entry name" value="EF-G C-terminal domain-like"/>
    <property type="match status" value="2"/>
</dbReference>
<dbReference type="SUPFAM" id="SSF52540">
    <property type="entry name" value="P-loop containing nucleoside triphosphate hydrolases"/>
    <property type="match status" value="1"/>
</dbReference>
<dbReference type="SUPFAM" id="SSF54211">
    <property type="entry name" value="Ribosomal protein S5 domain 2-like"/>
    <property type="match status" value="1"/>
</dbReference>
<dbReference type="SUPFAM" id="SSF50447">
    <property type="entry name" value="Translation proteins"/>
    <property type="match status" value="1"/>
</dbReference>
<dbReference type="PROSITE" id="PS00301">
    <property type="entry name" value="G_TR_1"/>
    <property type="match status" value="1"/>
</dbReference>
<dbReference type="PROSITE" id="PS51722">
    <property type="entry name" value="G_TR_2"/>
    <property type="match status" value="1"/>
</dbReference>
<sequence length="692" mass="76327">MTREFSLENTRNIGIMAHIDAGKTTATERILYYTGRIHKIGETHEGASQMDWMEQEQERGITITSAATTAQWKGHRVNIIDTPGHVDFTVEVERSLRVLDGAVAVLDAQSGVEPQTETVWRQATTYGVPRIVFVNKMDKIGADFLYSVGTIHDRLQANAHPIQLPIGAEDEFNGIIDLVEECAYMYSNDLGTDIERVEIPEEHKELAEEYRGKLIEAVAELDEEMMMKYLEGEEITVEELKAGIRKATTSVEFFPVICGSAFKNKGVQILLDAVIDYLPSPLDVPAIKGTLPDTEEAIERKSSDEEPFAALAFKIMTDPYVGKLTFFRVYSGVLNSGSYVKNSTKGKRERVGRILQMHANSREEISTVYAGDIAAAVGLKDTTTGDTLCDEKSLVILESMEFPEPVISVAIEPKSKADQDKMGTALSKLSEEDPTFRAHTDQETGQTIIAGMGELHLDIIVDRMRREFKVEANVGAPQVAYRETFRAAAKVEGKFARQSGGRGQFGHVWIEFEPNEEGKGFEFQNKVVGGVVPREYIPAVGAGLEDALKNGVLAGYPLVDIKAALVDGSYHDVDSSEMAFKIAASMALKAAVSKCSPVILEPMMKVEVVIPEEYMGDIMGDVTSRRGRVEGMEARGNAQVVRAMVPLSEMFGYATALRSNTQGRGTFSMTFDHYEEVPKSVSEEIIKKNKGE</sequence>
<keyword id="KW-0963">Cytoplasm</keyword>
<keyword id="KW-0251">Elongation factor</keyword>
<keyword id="KW-0342">GTP-binding</keyword>
<keyword id="KW-0547">Nucleotide-binding</keyword>
<keyword id="KW-0648">Protein biosynthesis</keyword>
<accession>A9VP74</accession>
<reference key="1">
    <citation type="journal article" date="2008" name="Chem. Biol. Interact.">
        <title>Extending the Bacillus cereus group genomics to putative food-borne pathogens of different toxicity.</title>
        <authorList>
            <person name="Lapidus A."/>
            <person name="Goltsman E."/>
            <person name="Auger S."/>
            <person name="Galleron N."/>
            <person name="Segurens B."/>
            <person name="Dossat C."/>
            <person name="Land M.L."/>
            <person name="Broussolle V."/>
            <person name="Brillard J."/>
            <person name="Guinebretiere M.-H."/>
            <person name="Sanchis V."/>
            <person name="Nguen-the C."/>
            <person name="Lereclus D."/>
            <person name="Richardson P."/>
            <person name="Wincker P."/>
            <person name="Weissenbach J."/>
            <person name="Ehrlich S.D."/>
            <person name="Sorokin A."/>
        </authorList>
    </citation>
    <scope>NUCLEOTIDE SEQUENCE [LARGE SCALE GENOMIC DNA]</scope>
    <source>
        <strain>KBAB4</strain>
    </source>
</reference>
<name>EFG_BACMK</name>
<comment type="function">
    <text evidence="1">Catalyzes the GTP-dependent ribosomal translocation step during translation elongation. During this step, the ribosome changes from the pre-translocational (PRE) to the post-translocational (POST) state as the newly formed A-site-bound peptidyl-tRNA and P-site-bound deacylated tRNA move to the P and E sites, respectively. Catalyzes the coordinated movement of the two tRNA molecules, the mRNA and conformational changes in the ribosome.</text>
</comment>
<comment type="subcellular location">
    <subcellularLocation>
        <location evidence="1">Cytoplasm</location>
    </subcellularLocation>
</comment>
<comment type="similarity">
    <text evidence="1">Belongs to the TRAFAC class translation factor GTPase superfamily. Classic translation factor GTPase family. EF-G/EF-2 subfamily.</text>
</comment>
<evidence type="ECO:0000255" key="1">
    <source>
        <dbReference type="HAMAP-Rule" id="MF_00054"/>
    </source>
</evidence>
<gene>
    <name evidence="1" type="primary">fusA</name>
    <name type="ordered locus">BcerKBAB4_0102</name>
</gene>
<protein>
    <recommendedName>
        <fullName evidence="1">Elongation factor G</fullName>
        <shortName evidence="1">EF-G</shortName>
    </recommendedName>
</protein>